<proteinExistence type="evidence at transcript level"/>
<name>FCG3A_CERAT</name>
<sequence length="254" mass="28935">MWQLLLPTALLLLVSAGMRAEDLPKAVVFLEPQWYRVLEKDSVTLKCQGAYSPEDNSTRWFHNESLISSQTSSYFIAAARVNNSGEYRCQTSLSTLSDPVQLEVHIGWLLLQAPRWVFKEEDSIHLRCHSWKNTLLHKVTYLQNGKGRKYFHQNSDFYIPKATLKDSGSYFCRGLIGSKNVSSETVNITITQDLAVSSISSFFPPGYQVSFCLVMVLLFAVDTGLYFSVKKSIPSSTSDWKDHKFKWSKDPQDK</sequence>
<organism>
    <name type="scientific">Cercocebus atys</name>
    <name type="common">Sooty mangabey</name>
    <name type="synonym">Cercocebus torquatus atys</name>
    <dbReference type="NCBI Taxonomy" id="9531"/>
    <lineage>
        <taxon>Eukaryota</taxon>
        <taxon>Metazoa</taxon>
        <taxon>Chordata</taxon>
        <taxon>Craniata</taxon>
        <taxon>Vertebrata</taxon>
        <taxon>Euteleostomi</taxon>
        <taxon>Mammalia</taxon>
        <taxon>Eutheria</taxon>
        <taxon>Euarchontoglires</taxon>
        <taxon>Primates</taxon>
        <taxon>Haplorrhini</taxon>
        <taxon>Catarrhini</taxon>
        <taxon>Cercopithecidae</taxon>
        <taxon>Cercopithecinae</taxon>
        <taxon>Cercocebus</taxon>
    </lineage>
</organism>
<protein>
    <recommendedName>
        <fullName evidence="2">Low affinity immunoglobulin gamma Fc region receptor III-A</fullName>
        <shortName>IgG Fc receptor III-A</shortName>
    </recommendedName>
    <alternativeName>
        <fullName>Fc-gamma RIII-alpha</fullName>
        <shortName>Fc-gamma RIII</shortName>
        <shortName>Fc-gamma RIIIa</shortName>
        <shortName evidence="1">FcgammaRIIIa</shortName>
    </alternativeName>
    <cdAntigenName evidence="7">CD16a</cdAntigenName>
</protein>
<evidence type="ECO:0000250" key="1">
    <source>
        <dbReference type="UniProtKB" id="A3RFZ7"/>
    </source>
</evidence>
<evidence type="ECO:0000250" key="2">
    <source>
        <dbReference type="UniProtKB" id="P08637"/>
    </source>
</evidence>
<evidence type="ECO:0000255" key="3"/>
<evidence type="ECO:0000255" key="4">
    <source>
        <dbReference type="PROSITE-ProRule" id="PRU00114"/>
    </source>
</evidence>
<evidence type="ECO:0000256" key="5">
    <source>
        <dbReference type="SAM" id="MobiDB-lite"/>
    </source>
</evidence>
<evidence type="ECO:0000269" key="6">
    <source>
    </source>
</evidence>
<evidence type="ECO:0000303" key="7">
    <source>
    </source>
</evidence>
<comment type="function">
    <text evidence="2">Receptor for the invariable Fc fragment of immunoglobulin gamma (IgG). Optimally activated upon binding of clustered antigen-IgG complexes displayed on cell surfaces, triggers lysis of antibody-coated cells, a process known as antibody-dependent cellular cytotoxicity (ADCC). Does not bind free monomeric IgG, thus avoiding inappropriate effector cell activation in the absence of antigenic trigger (By similarity). Mediates IgG effector functions on natural killer (NK) cells. Binds antigen-IgG complexes generated upon infection and triggers NK cell-dependent cytokine production and degranulation to limit viral load and propagation. Involved in the generation of memory-like adaptive NK cells capable to produce high amounts of IFNG and to efficiently eliminate virus-infected cells via ADCC. Regulates NK cell survival and proliferation, in particular by preventing NK cell progenitor apoptosis (By similarity). Fc-binding subunit that associates with CD247 and/or FCER1G adapters to form functional signaling complexes. Following the engagement of antigen-IgG complexes, triggers phosphorylation of immunoreceptor tyrosine-based activation motif (ITAM)-containing adapters with subsequent activation of phosphatidylinositol 3-kinase signaling and sustained elevation of intracellular calcium that ultimately drive NK cell activation. The ITAM-dependent signaling coupled to receptor phosphorylation by PKC mediates robust intracellular calcium flux that leads to production of pro-inflammatory cytokines, whereas in the absence of receptor phosphorylation it mainly activates phosphatidylinositol 3-kinase signaling leading to cell degranulation (By similarity). Costimulates NK cells and trigger lysis of target cells independently of IgG binding. Mediates the antitumor activities of therapeutic antibodies. Upon ligation on monocytes triggers TNFA-dependent ADCC of IgG-coated tumor cells (By similarity). Mediates enhanced ADCC in response to afucosylated IgGs (By similarity).</text>
</comment>
<comment type="subunit">
    <text evidence="2">Forms a heterooligomeric complex with ITAM-containing signaling subunits, either a homodimer of CD247, a homodimer of FCER1G or a heterodimer of CD247 and FCER1G, to form a functional receptor complex. Interacts (via transmembrane domain) with signaling subunits; this interaction is a prerequisite for receptor complex expression on the cell surface and intracellular signal transduction. Binds the Fc region of antigen-complexed IgG with a preference for IgG1 and IgG3 isotypes (By similarity). Interacts with CD2; this interaction is involved in NK cell activation and cytotoxicity (By similarity). Interacts with S100A4; this interaction inhibits PKC-dependent phosphorylation of FCGR3A (By similarity).</text>
</comment>
<comment type="subcellular location">
    <subcellularLocation>
        <location evidence="2">Cell membrane</location>
        <topology evidence="3">Single-pass type I membrane protein</topology>
    </subcellularLocation>
    <subcellularLocation>
        <location evidence="2">Secreted</location>
    </subcellularLocation>
    <text evidence="2">Also exists as a soluble receptor.</text>
</comment>
<comment type="tissue specificity">
    <text evidence="6">Lymphocytes, monocytes and neutrophils.</text>
</comment>
<comment type="PTM">
    <text evidence="2">Glycosylated. Glycosylation plays an inhibitory role in the interaction with IgG1 and IgG2.</text>
</comment>
<comment type="PTM">
    <text evidence="2">Undergoes rapid ectodomain shedding upon NK cell stimulation. The soluble form is produced by a proteolytic cleavage mediated by ADAM17. Repeated stimulation causes receptor shedding, a mechanism that allows for increased NK cell motility and detachment from opsonized target cells while avoiding activation-induced NK cell apoptosis.</text>
</comment>
<accession>Q09TM4</accession>
<feature type="signal peptide" evidence="3">
    <location>
        <begin position="1"/>
        <end position="20"/>
    </location>
</feature>
<feature type="chain" id="PRO_0000379976" description="Low affinity immunoglobulin gamma Fc region receptor III-A">
    <location>
        <begin position="21"/>
        <end position="254"/>
    </location>
</feature>
<feature type="transmembrane region" description="Helical" evidence="3">
    <location>
        <begin position="207"/>
        <end position="229"/>
    </location>
</feature>
<feature type="domain" description="Ig-like C2-type 1">
    <location>
        <begin position="24"/>
        <end position="105"/>
    </location>
</feature>
<feature type="domain" description="Ig-like C2-type 2">
    <location>
        <begin position="107"/>
        <end position="189"/>
    </location>
</feature>
<feature type="region of interest" description="Disordered" evidence="5">
    <location>
        <begin position="234"/>
        <end position="254"/>
    </location>
</feature>
<feature type="compositionally biased region" description="Basic and acidic residues" evidence="5">
    <location>
        <begin position="239"/>
        <end position="254"/>
    </location>
</feature>
<feature type="site" description="Cleavage; by ADAM17" evidence="2">
    <location>
        <begin position="195"/>
        <end position="196"/>
    </location>
</feature>
<feature type="site" description="Important for receptor turnover" evidence="2">
    <location>
        <position position="222"/>
    </location>
</feature>
<feature type="glycosylation site" description="N-linked (GlcNAc...) asparagine" evidence="3">
    <location>
        <position position="187"/>
    </location>
</feature>
<feature type="disulfide bond" evidence="4">
    <location>
        <begin position="47"/>
        <end position="89"/>
    </location>
</feature>
<feature type="disulfide bond" evidence="4">
    <location>
        <begin position="128"/>
        <end position="172"/>
    </location>
</feature>
<dbReference type="EMBL" id="DQ423376">
    <property type="protein sequence ID" value="ABD83656.1"/>
    <property type="molecule type" value="mRNA"/>
</dbReference>
<dbReference type="SMR" id="Q09TM4"/>
<dbReference type="STRING" id="9531.ENSCATP00000019810"/>
<dbReference type="GlyCosmos" id="Q09TM4">
    <property type="glycosylation" value="1 site, No reported glycans"/>
</dbReference>
<dbReference type="GeneID" id="105589237"/>
<dbReference type="KEGG" id="caty:105589237"/>
<dbReference type="Proteomes" id="UP000233060">
    <property type="component" value="Unassembled WGS sequence"/>
</dbReference>
<dbReference type="GO" id="GO:0009897">
    <property type="term" value="C:external side of plasma membrane"/>
    <property type="evidence" value="ECO:0007669"/>
    <property type="project" value="TreeGrafter"/>
</dbReference>
<dbReference type="GO" id="GO:0005615">
    <property type="term" value="C:extracellular space"/>
    <property type="evidence" value="ECO:0000250"/>
    <property type="project" value="UniProtKB"/>
</dbReference>
<dbReference type="GO" id="GO:0005886">
    <property type="term" value="C:plasma membrane"/>
    <property type="evidence" value="ECO:0000250"/>
    <property type="project" value="UniProtKB"/>
</dbReference>
<dbReference type="GO" id="GO:0019864">
    <property type="term" value="F:IgG binding"/>
    <property type="evidence" value="ECO:0007669"/>
    <property type="project" value="UniProtKB-KW"/>
</dbReference>
<dbReference type="GO" id="GO:0019770">
    <property type="term" value="F:IgG receptor activity"/>
    <property type="evidence" value="ECO:0007669"/>
    <property type="project" value="TreeGrafter"/>
</dbReference>
<dbReference type="GO" id="GO:0001788">
    <property type="term" value="P:antibody-dependent cellular cytotoxicity"/>
    <property type="evidence" value="ECO:0000250"/>
    <property type="project" value="UniProtKB"/>
</dbReference>
<dbReference type="GO" id="GO:0019722">
    <property type="term" value="P:calcium-mediated signaling"/>
    <property type="evidence" value="ECO:0000250"/>
    <property type="project" value="UniProtKB"/>
</dbReference>
<dbReference type="GO" id="GO:0038094">
    <property type="term" value="P:Fc-gamma receptor signaling pathway"/>
    <property type="evidence" value="ECO:0000250"/>
    <property type="project" value="UniProtKB"/>
</dbReference>
<dbReference type="GO" id="GO:0030101">
    <property type="term" value="P:natural killer cell activation"/>
    <property type="evidence" value="ECO:0000250"/>
    <property type="project" value="UniProtKB"/>
</dbReference>
<dbReference type="GO" id="GO:0043320">
    <property type="term" value="P:natural killer cell degranulation"/>
    <property type="evidence" value="ECO:0000250"/>
    <property type="project" value="UniProtKB"/>
</dbReference>
<dbReference type="GO" id="GO:0042267">
    <property type="term" value="P:natural killer cell mediated cytotoxicity"/>
    <property type="evidence" value="ECO:0000250"/>
    <property type="project" value="UniProtKB"/>
</dbReference>
<dbReference type="GO" id="GO:0043491">
    <property type="term" value="P:phosphatidylinositol 3-kinase/protein kinase B signal transduction"/>
    <property type="evidence" value="ECO:0000250"/>
    <property type="project" value="UniProtKB"/>
</dbReference>
<dbReference type="CDD" id="cd05752">
    <property type="entry name" value="Ig1_FcgammaR_like"/>
    <property type="match status" value="1"/>
</dbReference>
<dbReference type="CDD" id="cd05753">
    <property type="entry name" value="Ig2_FcgammaR_like"/>
    <property type="match status" value="1"/>
</dbReference>
<dbReference type="FunFam" id="2.60.40.10:FF:000217">
    <property type="entry name" value="High affinity immunoglobulin gamma Fc receptor I"/>
    <property type="match status" value="1"/>
</dbReference>
<dbReference type="FunFam" id="2.60.40.10:FF:000356">
    <property type="entry name" value="Low affinity immunoglobulin gamma Fc region receptor III-A"/>
    <property type="match status" value="1"/>
</dbReference>
<dbReference type="Gene3D" id="2.60.40.10">
    <property type="entry name" value="Immunoglobulins"/>
    <property type="match status" value="2"/>
</dbReference>
<dbReference type="InterPro" id="IPR007110">
    <property type="entry name" value="Ig-like_dom"/>
</dbReference>
<dbReference type="InterPro" id="IPR036179">
    <property type="entry name" value="Ig-like_dom_sf"/>
</dbReference>
<dbReference type="InterPro" id="IPR013783">
    <property type="entry name" value="Ig-like_fold"/>
</dbReference>
<dbReference type="InterPro" id="IPR050488">
    <property type="entry name" value="Ig_Fc_receptor"/>
</dbReference>
<dbReference type="InterPro" id="IPR003599">
    <property type="entry name" value="Ig_sub"/>
</dbReference>
<dbReference type="PANTHER" id="PTHR11481">
    <property type="entry name" value="IMMUNOGLOBULIN FC RECEPTOR"/>
    <property type="match status" value="1"/>
</dbReference>
<dbReference type="PANTHER" id="PTHR11481:SF103">
    <property type="entry name" value="LOW AFFINITY IMMUNOGLOBULIN GAMMA FC REGION RECEPTOR III-A-RELATED"/>
    <property type="match status" value="1"/>
</dbReference>
<dbReference type="Pfam" id="PF13895">
    <property type="entry name" value="Ig_2"/>
    <property type="match status" value="2"/>
</dbReference>
<dbReference type="SMART" id="SM00409">
    <property type="entry name" value="IG"/>
    <property type="match status" value="2"/>
</dbReference>
<dbReference type="SUPFAM" id="SSF48726">
    <property type="entry name" value="Immunoglobulin"/>
    <property type="match status" value="2"/>
</dbReference>
<dbReference type="PROSITE" id="PS50835">
    <property type="entry name" value="IG_LIKE"/>
    <property type="match status" value="1"/>
</dbReference>
<reference key="1">
    <citation type="journal article" date="2006" name="J. Immunol.">
        <title>IgG Fc receptor III homologues in nonhuman primate species: genetic characterization and ligand interactions.</title>
        <authorList>
            <person name="Rogers K.A."/>
            <person name="Scinicariello F."/>
            <person name="Attanasio R."/>
        </authorList>
    </citation>
    <scope>NUCLEOTIDE SEQUENCE [MRNA]</scope>
    <scope>FUNCTION</scope>
    <scope>PTM</scope>
    <scope>TISSUE SPECIFICITY</scope>
    <source>
        <tissue>Blood</tissue>
    </source>
</reference>
<reference key="2">
    <citation type="journal article" date="1994" name="Bull. World Health Organ.">
        <title>Nomenclature of Fc receptors. IUIS/WHO Subcommittee on Nomenclature of Fc receptors.</title>
        <authorList>
            <person name="Conrad D."/>
            <person name="Cooper M."/>
            <person name="Fridman W.H."/>
            <person name="Kinet J.P."/>
            <person name="Ravetch J."/>
        </authorList>
    </citation>
    <scope>NOMENCLATURE</scope>
</reference>
<gene>
    <name type="primary">FCGR3A</name>
    <name type="synonym">FCGR3</name>
</gene>
<keyword id="KW-1003">Cell membrane</keyword>
<keyword id="KW-1015">Disulfide bond</keyword>
<keyword id="KW-0325">Glycoprotein</keyword>
<keyword id="KW-0390">IgG-binding protein</keyword>
<keyword id="KW-0391">Immunity</keyword>
<keyword id="KW-0393">Immunoglobulin domain</keyword>
<keyword id="KW-0472">Membrane</keyword>
<keyword id="KW-0675">Receptor</keyword>
<keyword id="KW-1185">Reference proteome</keyword>
<keyword id="KW-0677">Repeat</keyword>
<keyword id="KW-0964">Secreted</keyword>
<keyword id="KW-0732">Signal</keyword>
<keyword id="KW-0812">Transmembrane</keyword>
<keyword id="KW-1133">Transmembrane helix</keyword>